<sequence>MFEKTNRMNLLFDFYQELLTTKQKAYVSFYYLDDYSLGEIAEEFEVSRQAIYDNIKRTEESLEKYEEKLGMLKKYQQREKLFTQLEAQLTKKNFLDEQVKDTLEQLKNID</sequence>
<reference key="1">
    <citation type="journal article" date="2001" name="Science">
        <title>Comparative genomics of Listeria species.</title>
        <authorList>
            <person name="Glaser P."/>
            <person name="Frangeul L."/>
            <person name="Buchrieser C."/>
            <person name="Rusniok C."/>
            <person name="Amend A."/>
            <person name="Baquero F."/>
            <person name="Berche P."/>
            <person name="Bloecker H."/>
            <person name="Brandt P."/>
            <person name="Chakraborty T."/>
            <person name="Charbit A."/>
            <person name="Chetouani F."/>
            <person name="Couve E."/>
            <person name="de Daruvar A."/>
            <person name="Dehoux P."/>
            <person name="Domann E."/>
            <person name="Dominguez-Bernal G."/>
            <person name="Duchaud E."/>
            <person name="Durant L."/>
            <person name="Dussurget O."/>
            <person name="Entian K.-D."/>
            <person name="Fsihi H."/>
            <person name="Garcia-del Portillo F."/>
            <person name="Garrido P."/>
            <person name="Gautier L."/>
            <person name="Goebel W."/>
            <person name="Gomez-Lopez N."/>
            <person name="Hain T."/>
            <person name="Hauf J."/>
            <person name="Jackson D."/>
            <person name="Jones L.-M."/>
            <person name="Kaerst U."/>
            <person name="Kreft J."/>
            <person name="Kuhn M."/>
            <person name="Kunst F."/>
            <person name="Kurapkat G."/>
            <person name="Madueno E."/>
            <person name="Maitournam A."/>
            <person name="Mata Vicente J."/>
            <person name="Ng E."/>
            <person name="Nedjari H."/>
            <person name="Nordsiek G."/>
            <person name="Novella S."/>
            <person name="de Pablos B."/>
            <person name="Perez-Diaz J.-C."/>
            <person name="Purcell R."/>
            <person name="Remmel B."/>
            <person name="Rose M."/>
            <person name="Schlueter T."/>
            <person name="Simoes N."/>
            <person name="Tierrez A."/>
            <person name="Vazquez-Boland J.-A."/>
            <person name="Voss H."/>
            <person name="Wehland J."/>
            <person name="Cossart P."/>
        </authorList>
    </citation>
    <scope>NUCLEOTIDE SEQUENCE [LARGE SCALE GENOMIC DNA]</scope>
    <source>
        <strain>ATCC BAA-679 / EGD-e</strain>
    </source>
</reference>
<evidence type="ECO:0000255" key="1">
    <source>
        <dbReference type="HAMAP-Rule" id="MF_00245"/>
    </source>
</evidence>
<feature type="chain" id="PRO_0000211871" description="UPF0122 protein lmo1802">
    <location>
        <begin position="1"/>
        <end position="110"/>
    </location>
</feature>
<dbReference type="EMBL" id="AL591981">
    <property type="protein sequence ID" value="CAC99880.1"/>
    <property type="molecule type" value="Genomic_DNA"/>
</dbReference>
<dbReference type="PIR" id="AB1300">
    <property type="entry name" value="AB1300"/>
</dbReference>
<dbReference type="RefSeq" id="NP_465327.1">
    <property type="nucleotide sequence ID" value="NC_003210.1"/>
</dbReference>
<dbReference type="RefSeq" id="WP_003723862.1">
    <property type="nucleotide sequence ID" value="NZ_CP149495.1"/>
</dbReference>
<dbReference type="SMR" id="Q8Y694"/>
<dbReference type="STRING" id="169963.gene:17594487"/>
<dbReference type="PaxDb" id="169963-lmo1802"/>
<dbReference type="EnsemblBacteria" id="CAC99880">
    <property type="protein sequence ID" value="CAC99880"/>
    <property type="gene ID" value="CAC99880"/>
</dbReference>
<dbReference type="GeneID" id="985927"/>
<dbReference type="KEGG" id="lmo:lmo1802"/>
<dbReference type="PATRIC" id="fig|169963.11.peg.1846"/>
<dbReference type="eggNOG" id="COG2739">
    <property type="taxonomic scope" value="Bacteria"/>
</dbReference>
<dbReference type="HOGENOM" id="CLU_129218_1_0_9"/>
<dbReference type="OrthoDB" id="6392at2"/>
<dbReference type="PhylomeDB" id="Q8Y694"/>
<dbReference type="BioCyc" id="LMON169963:LMO1802-MONOMER"/>
<dbReference type="Proteomes" id="UP000000817">
    <property type="component" value="Chromosome"/>
</dbReference>
<dbReference type="Gene3D" id="1.10.10.10">
    <property type="entry name" value="Winged helix-like DNA-binding domain superfamily/Winged helix DNA-binding domain"/>
    <property type="match status" value="1"/>
</dbReference>
<dbReference type="HAMAP" id="MF_00245">
    <property type="entry name" value="UPF0122"/>
    <property type="match status" value="1"/>
</dbReference>
<dbReference type="InterPro" id="IPR013324">
    <property type="entry name" value="RNA_pol_sigma_r3/r4-like"/>
</dbReference>
<dbReference type="InterPro" id="IPR007394">
    <property type="entry name" value="UPF0122"/>
</dbReference>
<dbReference type="InterPro" id="IPR054831">
    <property type="entry name" value="UPF0122_fam_protein"/>
</dbReference>
<dbReference type="InterPro" id="IPR036388">
    <property type="entry name" value="WH-like_DNA-bd_sf"/>
</dbReference>
<dbReference type="NCBIfam" id="NF001068">
    <property type="entry name" value="PRK00118.1-4"/>
    <property type="match status" value="1"/>
</dbReference>
<dbReference type="NCBIfam" id="NF001069">
    <property type="entry name" value="PRK00118.1-5"/>
    <property type="match status" value="1"/>
</dbReference>
<dbReference type="NCBIfam" id="NF001070">
    <property type="entry name" value="PRK00118.1-6"/>
    <property type="match status" value="1"/>
</dbReference>
<dbReference type="NCBIfam" id="NF045758">
    <property type="entry name" value="YlxM"/>
    <property type="match status" value="1"/>
</dbReference>
<dbReference type="PANTHER" id="PTHR40083">
    <property type="entry name" value="UPF0122 PROTEIN CBO2450/CLC_2298"/>
    <property type="match status" value="1"/>
</dbReference>
<dbReference type="PANTHER" id="PTHR40083:SF1">
    <property type="entry name" value="UPF0122 PROTEIN YLXM"/>
    <property type="match status" value="1"/>
</dbReference>
<dbReference type="Pfam" id="PF04297">
    <property type="entry name" value="UPF0122"/>
    <property type="match status" value="1"/>
</dbReference>
<dbReference type="SUPFAM" id="SSF88659">
    <property type="entry name" value="Sigma3 and sigma4 domains of RNA polymerase sigma factors"/>
    <property type="match status" value="1"/>
</dbReference>
<accession>Q8Y694</accession>
<gene>
    <name type="ordered locus">lmo1802</name>
</gene>
<comment type="function">
    <text evidence="1">Might take part in the signal recognition particle (SRP) pathway. This is inferred from the conservation of its genetic proximity to ftsY/ffh. May be a regulatory protein.</text>
</comment>
<comment type="similarity">
    <text evidence="1">Belongs to the UPF0122 family.</text>
</comment>
<protein>
    <recommendedName>
        <fullName evidence="1">UPF0122 protein lmo1802</fullName>
    </recommendedName>
</protein>
<organism>
    <name type="scientific">Listeria monocytogenes serovar 1/2a (strain ATCC BAA-679 / EGD-e)</name>
    <dbReference type="NCBI Taxonomy" id="169963"/>
    <lineage>
        <taxon>Bacteria</taxon>
        <taxon>Bacillati</taxon>
        <taxon>Bacillota</taxon>
        <taxon>Bacilli</taxon>
        <taxon>Bacillales</taxon>
        <taxon>Listeriaceae</taxon>
        <taxon>Listeria</taxon>
    </lineage>
</organism>
<name>Y1802_LISMO</name>
<keyword id="KW-1185">Reference proteome</keyword>
<proteinExistence type="inferred from homology"/>